<sequence>MPKGSGKVLSQNKKANHDYFIEETYETGIVLQGTEIKSIRAGRVNMKDSFAKIERGEVFLHNMHISPYEQGNRYNHDPLRTRKLLMHRKEINKLIGLTKEKGYSLVPLKLYLKNGFAKVLIGLGKGKKTYDKREDLKRKDAKREIERAFRDRQKGF</sequence>
<accession>A7Z8U4</accession>
<reference key="1">
    <citation type="journal article" date="2007" name="Nat. Biotechnol.">
        <title>Comparative analysis of the complete genome sequence of the plant growth-promoting bacterium Bacillus amyloliquefaciens FZB42.</title>
        <authorList>
            <person name="Chen X.H."/>
            <person name="Koumoutsi A."/>
            <person name="Scholz R."/>
            <person name="Eisenreich A."/>
            <person name="Schneider K."/>
            <person name="Heinemeyer I."/>
            <person name="Morgenstern B."/>
            <person name="Voss B."/>
            <person name="Hess W.R."/>
            <person name="Reva O."/>
            <person name="Junge H."/>
            <person name="Voigt B."/>
            <person name="Jungblut P.R."/>
            <person name="Vater J."/>
            <person name="Suessmuth R."/>
            <person name="Liesegang H."/>
            <person name="Strittmatter A."/>
            <person name="Gottschalk G."/>
            <person name="Borriss R."/>
        </authorList>
    </citation>
    <scope>NUCLEOTIDE SEQUENCE [LARGE SCALE GENOMIC DNA]</scope>
    <source>
        <strain>DSM 23117 / BGSC 10A6 / LMG 26770 / FZB42</strain>
    </source>
</reference>
<name>SSRP_BACVZ</name>
<feature type="chain" id="PRO_1000001997" description="SsrA-binding protein">
    <location>
        <begin position="1"/>
        <end position="156"/>
    </location>
</feature>
<comment type="function">
    <text evidence="1">Required for rescue of stalled ribosomes mediated by trans-translation. Binds to transfer-messenger RNA (tmRNA), required for stable association of tmRNA with ribosomes. tmRNA and SmpB together mimic tRNA shape, replacing the anticodon stem-loop with SmpB. tmRNA is encoded by the ssrA gene; the 2 termini fold to resemble tRNA(Ala) and it encodes a 'tag peptide', a short internal open reading frame. During trans-translation Ala-aminoacylated tmRNA acts like a tRNA, entering the A-site of stalled ribosomes, displacing the stalled mRNA. The ribosome then switches to translate the ORF on the tmRNA; the nascent peptide is terminated with the 'tag peptide' encoded by the tmRNA and targeted for degradation. The ribosome is freed to recommence translation, which seems to be the essential function of trans-translation.</text>
</comment>
<comment type="subcellular location">
    <subcellularLocation>
        <location evidence="1">Cytoplasm</location>
    </subcellularLocation>
    <text evidence="1">The tmRNA-SmpB complex associates with stalled 70S ribosomes.</text>
</comment>
<comment type="similarity">
    <text evidence="1">Belongs to the SmpB family.</text>
</comment>
<keyword id="KW-0963">Cytoplasm</keyword>
<keyword id="KW-0694">RNA-binding</keyword>
<organism>
    <name type="scientific">Bacillus velezensis (strain DSM 23117 / BGSC 10A6 / LMG 26770 / FZB42)</name>
    <name type="common">Bacillus amyloliquefaciens subsp. plantarum</name>
    <dbReference type="NCBI Taxonomy" id="326423"/>
    <lineage>
        <taxon>Bacteria</taxon>
        <taxon>Bacillati</taxon>
        <taxon>Bacillota</taxon>
        <taxon>Bacilli</taxon>
        <taxon>Bacillales</taxon>
        <taxon>Bacillaceae</taxon>
        <taxon>Bacillus</taxon>
        <taxon>Bacillus amyloliquefaciens group</taxon>
    </lineage>
</organism>
<protein>
    <recommendedName>
        <fullName evidence="1">SsrA-binding protein</fullName>
    </recommendedName>
    <alternativeName>
        <fullName evidence="1">Small protein B</fullName>
    </alternativeName>
</protein>
<proteinExistence type="inferred from homology"/>
<evidence type="ECO:0000255" key="1">
    <source>
        <dbReference type="HAMAP-Rule" id="MF_00023"/>
    </source>
</evidence>
<dbReference type="EMBL" id="CP000560">
    <property type="protein sequence ID" value="ABS75420.1"/>
    <property type="molecule type" value="Genomic_DNA"/>
</dbReference>
<dbReference type="RefSeq" id="WP_003151688.1">
    <property type="nucleotide sequence ID" value="NC_009725.2"/>
</dbReference>
<dbReference type="SMR" id="A7Z8U4"/>
<dbReference type="GeneID" id="93082233"/>
<dbReference type="KEGG" id="bay:RBAM_030890"/>
<dbReference type="HOGENOM" id="CLU_108953_0_0_9"/>
<dbReference type="Proteomes" id="UP000001120">
    <property type="component" value="Chromosome"/>
</dbReference>
<dbReference type="GO" id="GO:0005829">
    <property type="term" value="C:cytosol"/>
    <property type="evidence" value="ECO:0007669"/>
    <property type="project" value="TreeGrafter"/>
</dbReference>
<dbReference type="GO" id="GO:0003723">
    <property type="term" value="F:RNA binding"/>
    <property type="evidence" value="ECO:0007669"/>
    <property type="project" value="UniProtKB-UniRule"/>
</dbReference>
<dbReference type="GO" id="GO:0070929">
    <property type="term" value="P:trans-translation"/>
    <property type="evidence" value="ECO:0007669"/>
    <property type="project" value="UniProtKB-UniRule"/>
</dbReference>
<dbReference type="CDD" id="cd09294">
    <property type="entry name" value="SmpB"/>
    <property type="match status" value="1"/>
</dbReference>
<dbReference type="Gene3D" id="2.40.280.10">
    <property type="match status" value="1"/>
</dbReference>
<dbReference type="HAMAP" id="MF_00023">
    <property type="entry name" value="SmpB"/>
    <property type="match status" value="1"/>
</dbReference>
<dbReference type="InterPro" id="IPR023620">
    <property type="entry name" value="SmpB"/>
</dbReference>
<dbReference type="InterPro" id="IPR000037">
    <property type="entry name" value="SsrA-bd_prot"/>
</dbReference>
<dbReference type="InterPro" id="IPR020081">
    <property type="entry name" value="SsrA-bd_prot_CS"/>
</dbReference>
<dbReference type="NCBIfam" id="NF003843">
    <property type="entry name" value="PRK05422.1"/>
    <property type="match status" value="1"/>
</dbReference>
<dbReference type="NCBIfam" id="TIGR00086">
    <property type="entry name" value="smpB"/>
    <property type="match status" value="1"/>
</dbReference>
<dbReference type="PANTHER" id="PTHR30308:SF2">
    <property type="entry name" value="SSRA-BINDING PROTEIN"/>
    <property type="match status" value="1"/>
</dbReference>
<dbReference type="PANTHER" id="PTHR30308">
    <property type="entry name" value="TMRNA-BINDING COMPONENT OF TRANS-TRANSLATION TAGGING COMPLEX"/>
    <property type="match status" value="1"/>
</dbReference>
<dbReference type="Pfam" id="PF01668">
    <property type="entry name" value="SmpB"/>
    <property type="match status" value="1"/>
</dbReference>
<dbReference type="SUPFAM" id="SSF74982">
    <property type="entry name" value="Small protein B (SmpB)"/>
    <property type="match status" value="1"/>
</dbReference>
<dbReference type="PROSITE" id="PS01317">
    <property type="entry name" value="SSRP"/>
    <property type="match status" value="1"/>
</dbReference>
<gene>
    <name evidence="1" type="primary">smpB</name>
    <name type="ordered locus">RBAM_030890</name>
</gene>